<comment type="function">
    <text evidence="1">Involved in transcription antitermination. Required for transcription of ribosomal RNA (rRNA) genes. Binds specifically to the boxA antiterminator sequence of the ribosomal RNA (rrn) operons.</text>
</comment>
<comment type="similarity">
    <text evidence="1">Belongs to the NusB family.</text>
</comment>
<sequence length="160" mass="17741">MTVTDAPSANPTRRSRTIARVAAVQALFQCEQSGDTAETVISQFIRHRRISSTASFDDGHIPDADLKLFQEIVLGVTRRQDDIDAKLSDVLPEQWPLPRLDPVLRALLRAAVFEIGTDTPDRIIINEYLDVAHGFFSGDEPKMVNGILDTLSRRANDGNV</sequence>
<keyword id="KW-1185">Reference proteome</keyword>
<keyword id="KW-0694">RNA-binding</keyword>
<keyword id="KW-0804">Transcription</keyword>
<keyword id="KW-0889">Transcription antitermination</keyword>
<keyword id="KW-0805">Transcription regulation</keyword>
<reference key="1">
    <citation type="journal article" date="2005" name="Nat. Biotechnol.">
        <title>Complete genome sequence of the acetic acid bacterium Gluconobacter oxydans.</title>
        <authorList>
            <person name="Prust C."/>
            <person name="Hoffmeister M."/>
            <person name="Liesegang H."/>
            <person name="Wiezer A."/>
            <person name="Fricke W.F."/>
            <person name="Ehrenreich A."/>
            <person name="Gottschalk G."/>
            <person name="Deppenmeier U."/>
        </authorList>
    </citation>
    <scope>NUCLEOTIDE SEQUENCE [LARGE SCALE GENOMIC DNA]</scope>
    <source>
        <strain>621H</strain>
    </source>
</reference>
<accession>Q5FNA1</accession>
<dbReference type="EMBL" id="CP000009">
    <property type="protein sequence ID" value="AAW62146.1"/>
    <property type="molecule type" value="Genomic_DNA"/>
</dbReference>
<dbReference type="RefSeq" id="WP_011253915.1">
    <property type="nucleotide sequence ID" value="NC_006677.1"/>
</dbReference>
<dbReference type="SMR" id="Q5FNA1"/>
<dbReference type="STRING" id="290633.GOX2415"/>
<dbReference type="KEGG" id="gox:GOX2415"/>
<dbReference type="eggNOG" id="COG0781">
    <property type="taxonomic scope" value="Bacteria"/>
</dbReference>
<dbReference type="HOGENOM" id="CLU_087843_4_0_5"/>
<dbReference type="Proteomes" id="UP000006375">
    <property type="component" value="Chromosome"/>
</dbReference>
<dbReference type="GO" id="GO:0005829">
    <property type="term" value="C:cytosol"/>
    <property type="evidence" value="ECO:0007669"/>
    <property type="project" value="TreeGrafter"/>
</dbReference>
<dbReference type="GO" id="GO:0003723">
    <property type="term" value="F:RNA binding"/>
    <property type="evidence" value="ECO:0007669"/>
    <property type="project" value="UniProtKB-UniRule"/>
</dbReference>
<dbReference type="GO" id="GO:0006353">
    <property type="term" value="P:DNA-templated transcription termination"/>
    <property type="evidence" value="ECO:0007669"/>
    <property type="project" value="UniProtKB-UniRule"/>
</dbReference>
<dbReference type="GO" id="GO:0031564">
    <property type="term" value="P:transcription antitermination"/>
    <property type="evidence" value="ECO:0007669"/>
    <property type="project" value="UniProtKB-KW"/>
</dbReference>
<dbReference type="Gene3D" id="1.10.940.10">
    <property type="entry name" value="NusB-like"/>
    <property type="match status" value="1"/>
</dbReference>
<dbReference type="HAMAP" id="MF_00073">
    <property type="entry name" value="NusB"/>
    <property type="match status" value="1"/>
</dbReference>
<dbReference type="InterPro" id="IPR035926">
    <property type="entry name" value="NusB-like_sf"/>
</dbReference>
<dbReference type="InterPro" id="IPR011605">
    <property type="entry name" value="NusB_fam"/>
</dbReference>
<dbReference type="InterPro" id="IPR006027">
    <property type="entry name" value="NusB_RsmB_TIM44"/>
</dbReference>
<dbReference type="NCBIfam" id="TIGR01951">
    <property type="entry name" value="nusB"/>
    <property type="match status" value="1"/>
</dbReference>
<dbReference type="PANTHER" id="PTHR11078:SF3">
    <property type="entry name" value="ANTITERMINATION NUSB DOMAIN-CONTAINING PROTEIN"/>
    <property type="match status" value="1"/>
</dbReference>
<dbReference type="PANTHER" id="PTHR11078">
    <property type="entry name" value="N UTILIZATION SUBSTANCE PROTEIN B-RELATED"/>
    <property type="match status" value="1"/>
</dbReference>
<dbReference type="Pfam" id="PF01029">
    <property type="entry name" value="NusB"/>
    <property type="match status" value="1"/>
</dbReference>
<dbReference type="SUPFAM" id="SSF48013">
    <property type="entry name" value="NusB-like"/>
    <property type="match status" value="1"/>
</dbReference>
<protein>
    <recommendedName>
        <fullName evidence="1">Transcription antitermination protein NusB</fullName>
    </recommendedName>
    <alternativeName>
        <fullName evidence="1">Antitermination factor NusB</fullName>
    </alternativeName>
</protein>
<proteinExistence type="inferred from homology"/>
<feature type="chain" id="PRO_0000265526" description="Transcription antitermination protein NusB">
    <location>
        <begin position="1"/>
        <end position="160"/>
    </location>
</feature>
<name>NUSB_GLUOX</name>
<evidence type="ECO:0000255" key="1">
    <source>
        <dbReference type="HAMAP-Rule" id="MF_00073"/>
    </source>
</evidence>
<gene>
    <name evidence="1" type="primary">nusB</name>
    <name type="ordered locus">GOX2415</name>
</gene>
<organism>
    <name type="scientific">Gluconobacter oxydans (strain 621H)</name>
    <name type="common">Gluconobacter suboxydans</name>
    <dbReference type="NCBI Taxonomy" id="290633"/>
    <lineage>
        <taxon>Bacteria</taxon>
        <taxon>Pseudomonadati</taxon>
        <taxon>Pseudomonadota</taxon>
        <taxon>Alphaproteobacteria</taxon>
        <taxon>Acetobacterales</taxon>
        <taxon>Acetobacteraceae</taxon>
        <taxon>Gluconobacter</taxon>
    </lineage>
</organism>